<comment type="function">
    <text evidence="1">Bidirectionally degrades single-stranded DNA into large acid-insoluble oligonucleotides, which are then degraded further into small acid-soluble oligonucleotides.</text>
</comment>
<comment type="catalytic activity">
    <reaction evidence="1">
        <text>Exonucleolytic cleavage in either 5'- to 3'- or 3'- to 5'-direction to yield nucleoside 5'-phosphates.</text>
        <dbReference type="EC" id="3.1.11.6"/>
    </reaction>
</comment>
<comment type="subunit">
    <text evidence="1">Heterooligomer composed of large and small subunits.</text>
</comment>
<comment type="subcellular location">
    <subcellularLocation>
        <location evidence="1">Cytoplasm</location>
    </subcellularLocation>
</comment>
<comment type="similarity">
    <text evidence="1">Belongs to the XseB family.</text>
</comment>
<comment type="sequence caution" evidence="2">
    <conflict type="erroneous initiation">
        <sequence resource="EMBL-CDS" id="AAM84591"/>
    </conflict>
</comment>
<comment type="sequence caution" evidence="2">
    <conflict type="erroneous initiation">
        <sequence resource="EMBL-CDS" id="AAS61021"/>
    </conflict>
</comment>
<organism>
    <name type="scientific">Yersinia pestis</name>
    <dbReference type="NCBI Taxonomy" id="632"/>
    <lineage>
        <taxon>Bacteria</taxon>
        <taxon>Pseudomonadati</taxon>
        <taxon>Pseudomonadota</taxon>
        <taxon>Gammaproteobacteria</taxon>
        <taxon>Enterobacterales</taxon>
        <taxon>Yersiniaceae</taxon>
        <taxon>Yersinia</taxon>
    </lineage>
</organism>
<name>EX7S_YERPE</name>
<proteinExistence type="inferred from homology"/>
<feature type="chain" id="PRO_0000207038" description="Exodeoxyribonuclease 7 small subunit">
    <location>
        <begin position="1"/>
        <end position="84"/>
    </location>
</feature>
<gene>
    <name evidence="1" type="primary">xseB</name>
    <name type="ordered locus">YPO3175</name>
    <name type="ordered locus">y1010</name>
    <name type="ordered locus">YP_0756</name>
</gene>
<protein>
    <recommendedName>
        <fullName evidence="1">Exodeoxyribonuclease 7 small subunit</fullName>
        <ecNumber evidence="1">3.1.11.6</ecNumber>
    </recommendedName>
    <alternativeName>
        <fullName evidence="1">Exodeoxyribonuclease VII small subunit</fullName>
        <shortName evidence="1">Exonuclease VII small subunit</shortName>
    </alternativeName>
</protein>
<keyword id="KW-0963">Cytoplasm</keyword>
<keyword id="KW-0269">Exonuclease</keyword>
<keyword id="KW-0378">Hydrolase</keyword>
<keyword id="KW-0540">Nuclease</keyword>
<keyword id="KW-1185">Reference proteome</keyword>
<sequence length="84" mass="9307">MPKKAASPEIKAASFETSLSELEQIVTRLESGELPLEDALNEFERGVQLARQGQQTLLQAEQRVQILLSDDVDAPLKPFTPDTE</sequence>
<accession>Q8ZC47</accession>
<accession>Q0WCA8</accession>
<evidence type="ECO:0000255" key="1">
    <source>
        <dbReference type="HAMAP-Rule" id="MF_00337"/>
    </source>
</evidence>
<evidence type="ECO:0000305" key="2"/>
<dbReference type="EC" id="3.1.11.6" evidence="1"/>
<dbReference type="EMBL" id="AL590842">
    <property type="protein sequence ID" value="CAL21770.1"/>
    <property type="molecule type" value="Genomic_DNA"/>
</dbReference>
<dbReference type="EMBL" id="AE009952">
    <property type="protein sequence ID" value="AAM84591.1"/>
    <property type="status" value="ALT_INIT"/>
    <property type="molecule type" value="Genomic_DNA"/>
</dbReference>
<dbReference type="EMBL" id="AE017042">
    <property type="protein sequence ID" value="AAS61021.1"/>
    <property type="status" value="ALT_INIT"/>
    <property type="molecule type" value="Genomic_DNA"/>
</dbReference>
<dbReference type="PIR" id="AG0385">
    <property type="entry name" value="AG0385"/>
</dbReference>
<dbReference type="RefSeq" id="WP_002208660.1">
    <property type="nucleotide sequence ID" value="NZ_WUCM01000043.1"/>
</dbReference>
<dbReference type="RefSeq" id="YP_002348080.1">
    <property type="nucleotide sequence ID" value="NC_003143.1"/>
</dbReference>
<dbReference type="SMR" id="Q8ZC47"/>
<dbReference type="STRING" id="214092.YPO3175"/>
<dbReference type="PaxDb" id="214092-YPO3175"/>
<dbReference type="EnsemblBacteria" id="AAS61021">
    <property type="protein sequence ID" value="AAS61021"/>
    <property type="gene ID" value="YP_0756"/>
</dbReference>
<dbReference type="GeneID" id="57975538"/>
<dbReference type="KEGG" id="ype:YPO3175"/>
<dbReference type="KEGG" id="ypk:y1010"/>
<dbReference type="KEGG" id="ypm:YP_0756"/>
<dbReference type="PATRIC" id="fig|214092.21.peg.3631"/>
<dbReference type="eggNOG" id="COG1722">
    <property type="taxonomic scope" value="Bacteria"/>
</dbReference>
<dbReference type="HOGENOM" id="CLU_145918_3_3_6"/>
<dbReference type="OrthoDB" id="5591562at2"/>
<dbReference type="Proteomes" id="UP000000815">
    <property type="component" value="Chromosome"/>
</dbReference>
<dbReference type="Proteomes" id="UP000001019">
    <property type="component" value="Chromosome"/>
</dbReference>
<dbReference type="Proteomes" id="UP000002490">
    <property type="component" value="Chromosome"/>
</dbReference>
<dbReference type="GO" id="GO:0005829">
    <property type="term" value="C:cytosol"/>
    <property type="evidence" value="ECO:0000318"/>
    <property type="project" value="GO_Central"/>
</dbReference>
<dbReference type="GO" id="GO:0009318">
    <property type="term" value="C:exodeoxyribonuclease VII complex"/>
    <property type="evidence" value="ECO:0007669"/>
    <property type="project" value="InterPro"/>
</dbReference>
<dbReference type="GO" id="GO:0008855">
    <property type="term" value="F:exodeoxyribonuclease VII activity"/>
    <property type="evidence" value="ECO:0000318"/>
    <property type="project" value="GO_Central"/>
</dbReference>
<dbReference type="GO" id="GO:0006308">
    <property type="term" value="P:DNA catabolic process"/>
    <property type="evidence" value="ECO:0007669"/>
    <property type="project" value="UniProtKB-UniRule"/>
</dbReference>
<dbReference type="FunFam" id="1.10.287.1040:FF:000001">
    <property type="entry name" value="Exodeoxyribonuclease 7 small subunit"/>
    <property type="match status" value="1"/>
</dbReference>
<dbReference type="Gene3D" id="1.10.287.1040">
    <property type="entry name" value="Exonuclease VII, small subunit"/>
    <property type="match status" value="1"/>
</dbReference>
<dbReference type="HAMAP" id="MF_00337">
    <property type="entry name" value="Exonuc_7_S"/>
    <property type="match status" value="1"/>
</dbReference>
<dbReference type="InterPro" id="IPR003761">
    <property type="entry name" value="Exonuc_VII_S"/>
</dbReference>
<dbReference type="InterPro" id="IPR037004">
    <property type="entry name" value="Exonuc_VII_ssu_sf"/>
</dbReference>
<dbReference type="NCBIfam" id="NF002137">
    <property type="entry name" value="PRK00977.1-1"/>
    <property type="match status" value="1"/>
</dbReference>
<dbReference type="NCBIfam" id="NF002140">
    <property type="entry name" value="PRK00977.1-4"/>
    <property type="match status" value="1"/>
</dbReference>
<dbReference type="NCBIfam" id="TIGR01280">
    <property type="entry name" value="xseB"/>
    <property type="match status" value="1"/>
</dbReference>
<dbReference type="PANTHER" id="PTHR34137">
    <property type="entry name" value="EXODEOXYRIBONUCLEASE 7 SMALL SUBUNIT"/>
    <property type="match status" value="1"/>
</dbReference>
<dbReference type="PANTHER" id="PTHR34137:SF1">
    <property type="entry name" value="EXODEOXYRIBONUCLEASE 7 SMALL SUBUNIT"/>
    <property type="match status" value="1"/>
</dbReference>
<dbReference type="Pfam" id="PF02609">
    <property type="entry name" value="Exonuc_VII_S"/>
    <property type="match status" value="1"/>
</dbReference>
<dbReference type="PIRSF" id="PIRSF006488">
    <property type="entry name" value="Exonuc_VII_S"/>
    <property type="match status" value="1"/>
</dbReference>
<dbReference type="SUPFAM" id="SSF116842">
    <property type="entry name" value="XseB-like"/>
    <property type="match status" value="1"/>
</dbReference>
<reference key="1">
    <citation type="journal article" date="2001" name="Nature">
        <title>Genome sequence of Yersinia pestis, the causative agent of plague.</title>
        <authorList>
            <person name="Parkhill J."/>
            <person name="Wren B.W."/>
            <person name="Thomson N.R."/>
            <person name="Titball R.W."/>
            <person name="Holden M.T.G."/>
            <person name="Prentice M.B."/>
            <person name="Sebaihia M."/>
            <person name="James K.D."/>
            <person name="Churcher C.M."/>
            <person name="Mungall K.L."/>
            <person name="Baker S."/>
            <person name="Basham D."/>
            <person name="Bentley S.D."/>
            <person name="Brooks K."/>
            <person name="Cerdeno-Tarraga A.-M."/>
            <person name="Chillingworth T."/>
            <person name="Cronin A."/>
            <person name="Davies R.M."/>
            <person name="Davis P."/>
            <person name="Dougan G."/>
            <person name="Feltwell T."/>
            <person name="Hamlin N."/>
            <person name="Holroyd S."/>
            <person name="Jagels K."/>
            <person name="Karlyshev A.V."/>
            <person name="Leather S."/>
            <person name="Moule S."/>
            <person name="Oyston P.C.F."/>
            <person name="Quail M.A."/>
            <person name="Rutherford K.M."/>
            <person name="Simmonds M."/>
            <person name="Skelton J."/>
            <person name="Stevens K."/>
            <person name="Whitehead S."/>
            <person name="Barrell B.G."/>
        </authorList>
    </citation>
    <scope>NUCLEOTIDE SEQUENCE [LARGE SCALE GENOMIC DNA]</scope>
    <source>
        <strain>CO-92 / Biovar Orientalis</strain>
    </source>
</reference>
<reference key="2">
    <citation type="journal article" date="2002" name="J. Bacteriol.">
        <title>Genome sequence of Yersinia pestis KIM.</title>
        <authorList>
            <person name="Deng W."/>
            <person name="Burland V."/>
            <person name="Plunkett G. III"/>
            <person name="Boutin A."/>
            <person name="Mayhew G.F."/>
            <person name="Liss P."/>
            <person name="Perna N.T."/>
            <person name="Rose D.J."/>
            <person name="Mau B."/>
            <person name="Zhou S."/>
            <person name="Schwartz D.C."/>
            <person name="Fetherston J.D."/>
            <person name="Lindler L.E."/>
            <person name="Brubaker R.R."/>
            <person name="Plano G.V."/>
            <person name="Straley S.C."/>
            <person name="McDonough K.A."/>
            <person name="Nilles M.L."/>
            <person name="Matson J.S."/>
            <person name="Blattner F.R."/>
            <person name="Perry R.D."/>
        </authorList>
    </citation>
    <scope>NUCLEOTIDE SEQUENCE [LARGE SCALE GENOMIC DNA]</scope>
    <source>
        <strain>KIM10+ / Biovar Mediaevalis</strain>
    </source>
</reference>
<reference key="3">
    <citation type="journal article" date="2004" name="DNA Res.">
        <title>Complete genome sequence of Yersinia pestis strain 91001, an isolate avirulent to humans.</title>
        <authorList>
            <person name="Song Y."/>
            <person name="Tong Z."/>
            <person name="Wang J."/>
            <person name="Wang L."/>
            <person name="Guo Z."/>
            <person name="Han Y."/>
            <person name="Zhang J."/>
            <person name="Pei D."/>
            <person name="Zhou D."/>
            <person name="Qin H."/>
            <person name="Pang X."/>
            <person name="Han Y."/>
            <person name="Zhai J."/>
            <person name="Li M."/>
            <person name="Cui B."/>
            <person name="Qi Z."/>
            <person name="Jin L."/>
            <person name="Dai R."/>
            <person name="Chen F."/>
            <person name="Li S."/>
            <person name="Ye C."/>
            <person name="Du Z."/>
            <person name="Lin W."/>
            <person name="Wang J."/>
            <person name="Yu J."/>
            <person name="Yang H."/>
            <person name="Wang J."/>
            <person name="Huang P."/>
            <person name="Yang R."/>
        </authorList>
    </citation>
    <scope>NUCLEOTIDE SEQUENCE [LARGE SCALE GENOMIC DNA]</scope>
    <source>
        <strain>91001 / Biovar Mediaevalis</strain>
    </source>
</reference>